<sequence>MSTFAIPRSVEWRETHVTILNQQKLPSIIEYIDLHTLEDVYEAIATLKVRGAPAIGITAAYGLALAALRYDTESLDEFRRRLKRDRDYLASARPTAVNLFWALDRLVTAAADALSVNEAKTTLVHEAIRIQVEDEDVCRRIGEHALSLFRPGERVMTICNAGSIATARYGTALAPFYLAKEKGIELSVYALETRPVLQGARLTAWELMQAGVDVTLITDNMAAQAIKAKGIGAIIVGADRIAQNGDTANKIGTFGLALLAKSFDIPFYVAAPLSTIDLTTKTGADIPIEERHPDEVTHIAGVRIAPEGVNVYNPAFDVTPNELITAIITEKGIIRGNYNATLPSLFTKEEQHETI</sequence>
<accession>Q5L1E6</accession>
<dbReference type="EC" id="5.3.1.23" evidence="1"/>
<dbReference type="EMBL" id="BA000043">
    <property type="protein sequence ID" value="BAD75234.1"/>
    <property type="molecule type" value="Genomic_DNA"/>
</dbReference>
<dbReference type="RefSeq" id="WP_011230450.1">
    <property type="nucleotide sequence ID" value="NC_006510.1"/>
</dbReference>
<dbReference type="SMR" id="Q5L1E6"/>
<dbReference type="STRING" id="235909.GK0949"/>
<dbReference type="GeneID" id="32062879"/>
<dbReference type="KEGG" id="gka:GK0949"/>
<dbReference type="eggNOG" id="COG0182">
    <property type="taxonomic scope" value="Bacteria"/>
</dbReference>
<dbReference type="HOGENOM" id="CLU_016218_1_2_9"/>
<dbReference type="UniPathway" id="UPA00904">
    <property type="reaction ID" value="UER00874"/>
</dbReference>
<dbReference type="Proteomes" id="UP000001172">
    <property type="component" value="Chromosome"/>
</dbReference>
<dbReference type="GO" id="GO:0046523">
    <property type="term" value="F:S-methyl-5-thioribose-1-phosphate isomerase activity"/>
    <property type="evidence" value="ECO:0007669"/>
    <property type="project" value="UniProtKB-UniRule"/>
</dbReference>
<dbReference type="GO" id="GO:0019509">
    <property type="term" value="P:L-methionine salvage from methylthioadenosine"/>
    <property type="evidence" value="ECO:0007669"/>
    <property type="project" value="UniProtKB-UniRule"/>
</dbReference>
<dbReference type="FunFam" id="1.20.120.420:FF:000003">
    <property type="entry name" value="Methylthioribose-1-phosphate isomerase"/>
    <property type="match status" value="1"/>
</dbReference>
<dbReference type="FunFam" id="3.40.50.10470:FF:000006">
    <property type="entry name" value="Methylthioribose-1-phosphate isomerase"/>
    <property type="match status" value="1"/>
</dbReference>
<dbReference type="Gene3D" id="1.20.120.420">
    <property type="entry name" value="translation initiation factor eif-2b, domain 1"/>
    <property type="match status" value="1"/>
</dbReference>
<dbReference type="Gene3D" id="3.40.50.10470">
    <property type="entry name" value="Translation initiation factor eif-2b, domain 2"/>
    <property type="match status" value="1"/>
</dbReference>
<dbReference type="HAMAP" id="MF_01678">
    <property type="entry name" value="Salvage_MtnA"/>
    <property type="match status" value="1"/>
</dbReference>
<dbReference type="InterPro" id="IPR000649">
    <property type="entry name" value="IF-2B-related"/>
</dbReference>
<dbReference type="InterPro" id="IPR005251">
    <property type="entry name" value="IF-M1Pi"/>
</dbReference>
<dbReference type="InterPro" id="IPR042529">
    <property type="entry name" value="IF_2B-like_C"/>
</dbReference>
<dbReference type="InterPro" id="IPR011559">
    <property type="entry name" value="Initiation_fac_2B_a/b/d"/>
</dbReference>
<dbReference type="InterPro" id="IPR027363">
    <property type="entry name" value="M1Pi_N"/>
</dbReference>
<dbReference type="InterPro" id="IPR037171">
    <property type="entry name" value="NagB/RpiA_transferase-like"/>
</dbReference>
<dbReference type="NCBIfam" id="TIGR00524">
    <property type="entry name" value="eIF-2B_rel"/>
    <property type="match status" value="1"/>
</dbReference>
<dbReference type="NCBIfam" id="NF004326">
    <property type="entry name" value="PRK05720.1"/>
    <property type="match status" value="1"/>
</dbReference>
<dbReference type="NCBIfam" id="TIGR00512">
    <property type="entry name" value="salvage_mtnA"/>
    <property type="match status" value="1"/>
</dbReference>
<dbReference type="PANTHER" id="PTHR43475">
    <property type="entry name" value="METHYLTHIORIBOSE-1-PHOSPHATE ISOMERASE"/>
    <property type="match status" value="1"/>
</dbReference>
<dbReference type="PANTHER" id="PTHR43475:SF4">
    <property type="entry name" value="METHYLTHIORIBOSE-1-PHOSPHATE ISOMERASE"/>
    <property type="match status" value="1"/>
</dbReference>
<dbReference type="Pfam" id="PF01008">
    <property type="entry name" value="IF-2B"/>
    <property type="match status" value="1"/>
</dbReference>
<dbReference type="SUPFAM" id="SSF100950">
    <property type="entry name" value="NagB/RpiA/CoA transferase-like"/>
    <property type="match status" value="1"/>
</dbReference>
<organism>
    <name type="scientific">Geobacillus kaustophilus (strain HTA426)</name>
    <dbReference type="NCBI Taxonomy" id="235909"/>
    <lineage>
        <taxon>Bacteria</taxon>
        <taxon>Bacillati</taxon>
        <taxon>Bacillota</taxon>
        <taxon>Bacilli</taxon>
        <taxon>Bacillales</taxon>
        <taxon>Anoxybacillaceae</taxon>
        <taxon>Geobacillus</taxon>
        <taxon>Geobacillus thermoleovorans group</taxon>
    </lineage>
</organism>
<feature type="chain" id="PRO_0000357185" description="Methylthioribose-1-phosphate isomerase">
    <location>
        <begin position="1"/>
        <end position="355"/>
    </location>
</feature>
<feature type="active site" description="Proton donor" evidence="1">
    <location>
        <position position="239"/>
    </location>
</feature>
<feature type="binding site" evidence="1">
    <location>
        <begin position="50"/>
        <end position="52"/>
    </location>
    <ligand>
        <name>substrate</name>
    </ligand>
</feature>
<feature type="binding site" evidence="1">
    <location>
        <position position="93"/>
    </location>
    <ligand>
        <name>substrate</name>
    </ligand>
</feature>
<feature type="binding site" evidence="1">
    <location>
        <position position="198"/>
    </location>
    <ligand>
        <name>substrate</name>
    </ligand>
</feature>
<feature type="binding site" evidence="1">
    <location>
        <begin position="249"/>
        <end position="250"/>
    </location>
    <ligand>
        <name>substrate</name>
    </ligand>
</feature>
<feature type="site" description="Transition state stabilizer" evidence="1">
    <location>
        <position position="159"/>
    </location>
</feature>
<name>MTNA_GEOKA</name>
<gene>
    <name evidence="1" type="primary">mtnA</name>
    <name type="ordered locus">GK0949</name>
</gene>
<comment type="function">
    <text evidence="1">Catalyzes the interconversion of methylthioribose-1-phosphate (MTR-1-P) into methylthioribulose-1-phosphate (MTRu-1-P).</text>
</comment>
<comment type="catalytic activity">
    <reaction evidence="1">
        <text>5-(methylsulfanyl)-alpha-D-ribose 1-phosphate = 5-(methylsulfanyl)-D-ribulose 1-phosphate</text>
        <dbReference type="Rhea" id="RHEA:19989"/>
        <dbReference type="ChEBI" id="CHEBI:58533"/>
        <dbReference type="ChEBI" id="CHEBI:58548"/>
        <dbReference type="EC" id="5.3.1.23"/>
    </reaction>
</comment>
<comment type="pathway">
    <text evidence="1">Amino-acid biosynthesis; L-methionine biosynthesis via salvage pathway; L-methionine from S-methyl-5-thio-alpha-D-ribose 1-phosphate: step 1/6.</text>
</comment>
<comment type="subunit">
    <text>Homodimer.</text>
</comment>
<comment type="similarity">
    <text evidence="2">Belongs to the eIF-2B alpha/beta/delta subunits family. MtnA subfamily.</text>
</comment>
<evidence type="ECO:0000255" key="1">
    <source>
        <dbReference type="HAMAP-Rule" id="MF_01678"/>
    </source>
</evidence>
<evidence type="ECO:0000305" key="2"/>
<proteinExistence type="inferred from homology"/>
<keyword id="KW-0028">Amino-acid biosynthesis</keyword>
<keyword id="KW-0413">Isomerase</keyword>
<keyword id="KW-0486">Methionine biosynthesis</keyword>
<keyword id="KW-1185">Reference proteome</keyword>
<protein>
    <recommendedName>
        <fullName evidence="1">Methylthioribose-1-phosphate isomerase</fullName>
        <shortName evidence="1">M1Pi</shortName>
        <shortName evidence="1">MTR-1-P isomerase</shortName>
        <ecNumber evidence="1">5.3.1.23</ecNumber>
    </recommendedName>
    <alternativeName>
        <fullName evidence="1">S-methyl-5-thioribose-1-phosphate isomerase</fullName>
    </alternativeName>
</protein>
<reference key="1">
    <citation type="journal article" date="2004" name="Nucleic Acids Res.">
        <title>Thermoadaptation trait revealed by the genome sequence of thermophilic Geobacillus kaustophilus.</title>
        <authorList>
            <person name="Takami H."/>
            <person name="Takaki Y."/>
            <person name="Chee G.-J."/>
            <person name="Nishi S."/>
            <person name="Shimamura S."/>
            <person name="Suzuki H."/>
            <person name="Matsui S."/>
            <person name="Uchiyama I."/>
        </authorList>
    </citation>
    <scope>NUCLEOTIDE SEQUENCE [LARGE SCALE GENOMIC DNA]</scope>
    <source>
        <strain>HTA426</strain>
    </source>
</reference>